<feature type="chain" id="PRO_0000413128" description="Inosine triphosphate pyrophosphatase">
    <location>
        <begin position="1"/>
        <end position="191"/>
    </location>
</feature>
<feature type="binding site" evidence="1">
    <location>
        <begin position="12"/>
        <end position="17"/>
    </location>
    <ligand>
        <name>ITP</name>
        <dbReference type="ChEBI" id="CHEBI:61402"/>
    </ligand>
</feature>
<feature type="binding site" evidence="1">
    <location>
        <position position="40"/>
    </location>
    <ligand>
        <name>Mg(2+)</name>
        <dbReference type="ChEBI" id="CHEBI:18420"/>
    </ligand>
</feature>
<feature type="binding site" evidence="1">
    <location>
        <position position="52"/>
    </location>
    <ligand>
        <name>ITP</name>
        <dbReference type="ChEBI" id="CHEBI:61402"/>
    </ligand>
</feature>
<feature type="binding site" evidence="1">
    <location>
        <begin position="68"/>
        <end position="69"/>
    </location>
    <ligand>
        <name>ITP</name>
        <dbReference type="ChEBI" id="CHEBI:61402"/>
    </ligand>
</feature>
<feature type="binding site" evidence="1">
    <location>
        <position position="85"/>
    </location>
    <ligand>
        <name>ITP</name>
        <dbReference type="ChEBI" id="CHEBI:61402"/>
    </ligand>
</feature>
<feature type="binding site" evidence="1">
    <location>
        <begin position="144"/>
        <end position="147"/>
    </location>
    <ligand>
        <name>ITP</name>
        <dbReference type="ChEBI" id="CHEBI:61402"/>
    </ligand>
</feature>
<feature type="binding site" evidence="1">
    <location>
        <position position="167"/>
    </location>
    <ligand>
        <name>ITP</name>
        <dbReference type="ChEBI" id="CHEBI:61402"/>
    </ligand>
</feature>
<feature type="binding site" evidence="1">
    <location>
        <begin position="172"/>
        <end position="173"/>
    </location>
    <ligand>
        <name>ITP</name>
        <dbReference type="ChEBI" id="CHEBI:61402"/>
    </ligand>
</feature>
<comment type="function">
    <text evidence="1">Pyrophosphatase that hydrolyzes non-canonical purine nucleotides such as inosine triphosphate (ITP), deoxyinosine triphosphate (dITP) or xanthosine 5'-triphosphate (XTP) to their respective monophosphate derivatives. The enzyme does not distinguish between the deoxy- and ribose forms. Probably excludes non-canonical purines from RNA and DNA precursor pools, thus preventing their incorporation into RNA and DNA and avoiding chromosomal lesions.</text>
</comment>
<comment type="catalytic activity">
    <reaction evidence="1">
        <text>ITP + H2O = IMP + diphosphate + H(+)</text>
        <dbReference type="Rhea" id="RHEA:29399"/>
        <dbReference type="ChEBI" id="CHEBI:15377"/>
        <dbReference type="ChEBI" id="CHEBI:15378"/>
        <dbReference type="ChEBI" id="CHEBI:33019"/>
        <dbReference type="ChEBI" id="CHEBI:58053"/>
        <dbReference type="ChEBI" id="CHEBI:61402"/>
        <dbReference type="EC" id="3.6.1.66"/>
    </reaction>
    <physiologicalReaction direction="left-to-right" evidence="1">
        <dbReference type="Rhea" id="RHEA:29400"/>
    </physiologicalReaction>
</comment>
<comment type="catalytic activity">
    <reaction evidence="1">
        <text>dITP + H2O = dIMP + diphosphate + H(+)</text>
        <dbReference type="Rhea" id="RHEA:28342"/>
        <dbReference type="ChEBI" id="CHEBI:15377"/>
        <dbReference type="ChEBI" id="CHEBI:15378"/>
        <dbReference type="ChEBI" id="CHEBI:33019"/>
        <dbReference type="ChEBI" id="CHEBI:61194"/>
        <dbReference type="ChEBI" id="CHEBI:61382"/>
        <dbReference type="EC" id="3.6.1.66"/>
    </reaction>
    <physiologicalReaction direction="left-to-right" evidence="1">
        <dbReference type="Rhea" id="RHEA:28343"/>
    </physiologicalReaction>
</comment>
<comment type="catalytic activity">
    <reaction evidence="1">
        <text>XTP + H2O = XMP + diphosphate + H(+)</text>
        <dbReference type="Rhea" id="RHEA:28610"/>
        <dbReference type="ChEBI" id="CHEBI:15377"/>
        <dbReference type="ChEBI" id="CHEBI:15378"/>
        <dbReference type="ChEBI" id="CHEBI:33019"/>
        <dbReference type="ChEBI" id="CHEBI:57464"/>
        <dbReference type="ChEBI" id="CHEBI:61314"/>
        <dbReference type="EC" id="3.6.1.66"/>
    </reaction>
    <physiologicalReaction direction="left-to-right" evidence="1">
        <dbReference type="Rhea" id="RHEA:28611"/>
    </physiologicalReaction>
</comment>
<comment type="cofactor">
    <cofactor evidence="1">
        <name>Mg(2+)</name>
        <dbReference type="ChEBI" id="CHEBI:18420"/>
    </cofactor>
    <cofactor evidence="1">
        <name>Mn(2+)</name>
        <dbReference type="ChEBI" id="CHEBI:29035"/>
    </cofactor>
    <text evidence="1">Binds 1 divalent metal cation per subunit; can use either Mg(2+) or Mn(2+).</text>
</comment>
<comment type="subunit">
    <text evidence="1">Homodimer.</text>
</comment>
<comment type="subcellular location">
    <subcellularLocation>
        <location evidence="1">Cytoplasm</location>
    </subcellularLocation>
    <subcellularLocation>
        <location evidence="1">Nucleus</location>
    </subcellularLocation>
</comment>
<comment type="similarity">
    <text evidence="1">Belongs to the HAM1 NTPase family.</text>
</comment>
<proteinExistence type="inferred from homology"/>
<name>ITPA_ASPOR</name>
<dbReference type="EC" id="3.6.1.66" evidence="1"/>
<dbReference type="EMBL" id="BA000056">
    <property type="protein sequence ID" value="BAE66124.1"/>
    <property type="molecule type" value="Genomic_DNA"/>
</dbReference>
<dbReference type="RefSeq" id="XP_023094085.1">
    <property type="nucleotide sequence ID" value="XM_023233759.1"/>
</dbReference>
<dbReference type="SMR" id="Q2TX99"/>
<dbReference type="STRING" id="510516.Q2TX99"/>
<dbReference type="EnsemblFungi" id="BAE66124">
    <property type="protein sequence ID" value="BAE66124"/>
    <property type="gene ID" value="AO090010000228"/>
</dbReference>
<dbReference type="GeneID" id="5999391"/>
<dbReference type="VEuPathDB" id="FungiDB:AO090010000228"/>
<dbReference type="HOGENOM" id="CLU_082080_1_1_1"/>
<dbReference type="OMA" id="NENDGAT"/>
<dbReference type="Proteomes" id="UP000006564">
    <property type="component" value="Chromosome 8"/>
</dbReference>
<dbReference type="GO" id="GO:0005737">
    <property type="term" value="C:cytoplasm"/>
    <property type="evidence" value="ECO:0007669"/>
    <property type="project" value="UniProtKB-SubCell"/>
</dbReference>
<dbReference type="GO" id="GO:0005634">
    <property type="term" value="C:nucleus"/>
    <property type="evidence" value="ECO:0007669"/>
    <property type="project" value="UniProtKB-SubCell"/>
</dbReference>
<dbReference type="GO" id="GO:0035870">
    <property type="term" value="F:dITP diphosphatase activity"/>
    <property type="evidence" value="ECO:0007669"/>
    <property type="project" value="RHEA"/>
</dbReference>
<dbReference type="GO" id="GO:0036220">
    <property type="term" value="F:ITP diphosphatase activity"/>
    <property type="evidence" value="ECO:0007669"/>
    <property type="project" value="RHEA"/>
</dbReference>
<dbReference type="GO" id="GO:0046872">
    <property type="term" value="F:metal ion binding"/>
    <property type="evidence" value="ECO:0007669"/>
    <property type="project" value="UniProtKB-KW"/>
</dbReference>
<dbReference type="GO" id="GO:0000166">
    <property type="term" value="F:nucleotide binding"/>
    <property type="evidence" value="ECO:0007669"/>
    <property type="project" value="UniProtKB-KW"/>
</dbReference>
<dbReference type="GO" id="GO:0036222">
    <property type="term" value="F:XTP diphosphatase activity"/>
    <property type="evidence" value="ECO:0007669"/>
    <property type="project" value="RHEA"/>
</dbReference>
<dbReference type="GO" id="GO:0009204">
    <property type="term" value="P:deoxyribonucleoside triphosphate catabolic process"/>
    <property type="evidence" value="ECO:0007669"/>
    <property type="project" value="UniProtKB-UniRule"/>
</dbReference>
<dbReference type="GO" id="GO:0009117">
    <property type="term" value="P:nucleotide metabolic process"/>
    <property type="evidence" value="ECO:0007669"/>
    <property type="project" value="UniProtKB-KW"/>
</dbReference>
<dbReference type="CDD" id="cd00515">
    <property type="entry name" value="HAM1"/>
    <property type="match status" value="1"/>
</dbReference>
<dbReference type="FunFam" id="3.90.950.10:FF:000003">
    <property type="entry name" value="Inosine triphosphate pyrophosphatase"/>
    <property type="match status" value="1"/>
</dbReference>
<dbReference type="Gene3D" id="3.90.950.10">
    <property type="match status" value="1"/>
</dbReference>
<dbReference type="HAMAP" id="MF_03148">
    <property type="entry name" value="HAM1_NTPase"/>
    <property type="match status" value="1"/>
</dbReference>
<dbReference type="InterPro" id="IPR027502">
    <property type="entry name" value="ITPase"/>
</dbReference>
<dbReference type="InterPro" id="IPR029001">
    <property type="entry name" value="ITPase-like_fam"/>
</dbReference>
<dbReference type="InterPro" id="IPR002637">
    <property type="entry name" value="RdgB/HAM1"/>
</dbReference>
<dbReference type="NCBIfam" id="TIGR00042">
    <property type="entry name" value="RdgB/HAM1 family non-canonical purine NTP pyrophosphatase"/>
    <property type="match status" value="1"/>
</dbReference>
<dbReference type="PANTHER" id="PTHR11067:SF9">
    <property type="entry name" value="INOSINE TRIPHOSPHATE PYROPHOSPHATASE"/>
    <property type="match status" value="1"/>
</dbReference>
<dbReference type="PANTHER" id="PTHR11067">
    <property type="entry name" value="INOSINE TRIPHOSPHATE PYROPHOSPHATASE/HAM1 PROTEIN"/>
    <property type="match status" value="1"/>
</dbReference>
<dbReference type="Pfam" id="PF01725">
    <property type="entry name" value="Ham1p_like"/>
    <property type="match status" value="1"/>
</dbReference>
<dbReference type="SUPFAM" id="SSF52972">
    <property type="entry name" value="ITPase-like"/>
    <property type="match status" value="1"/>
</dbReference>
<evidence type="ECO:0000255" key="1">
    <source>
        <dbReference type="HAMAP-Rule" id="MF_03148"/>
    </source>
</evidence>
<gene>
    <name type="ORF">AO090010000228</name>
</gene>
<keyword id="KW-0963">Cytoplasm</keyword>
<keyword id="KW-0378">Hydrolase</keyword>
<keyword id="KW-0460">Magnesium</keyword>
<keyword id="KW-0464">Manganese</keyword>
<keyword id="KW-0479">Metal-binding</keyword>
<keyword id="KW-0546">Nucleotide metabolism</keyword>
<keyword id="KW-0547">Nucleotide-binding</keyword>
<keyword id="KW-0539">Nucleus</keyword>
<keyword id="KW-1185">Reference proteome</keyword>
<organism>
    <name type="scientific">Aspergillus oryzae (strain ATCC 42149 / RIB 40)</name>
    <name type="common">Yellow koji mold</name>
    <dbReference type="NCBI Taxonomy" id="510516"/>
    <lineage>
        <taxon>Eukaryota</taxon>
        <taxon>Fungi</taxon>
        <taxon>Dikarya</taxon>
        <taxon>Ascomycota</taxon>
        <taxon>Pezizomycotina</taxon>
        <taxon>Eurotiomycetes</taxon>
        <taxon>Eurotiomycetidae</taxon>
        <taxon>Eurotiales</taxon>
        <taxon>Aspergillaceae</taxon>
        <taxon>Aspergillus</taxon>
        <taxon>Aspergillus subgen. Circumdati</taxon>
    </lineage>
</organism>
<reference key="1">
    <citation type="journal article" date="2005" name="Nature">
        <title>Genome sequencing and analysis of Aspergillus oryzae.</title>
        <authorList>
            <person name="Machida M."/>
            <person name="Asai K."/>
            <person name="Sano M."/>
            <person name="Tanaka T."/>
            <person name="Kumagai T."/>
            <person name="Terai G."/>
            <person name="Kusumoto K."/>
            <person name="Arima T."/>
            <person name="Akita O."/>
            <person name="Kashiwagi Y."/>
            <person name="Abe K."/>
            <person name="Gomi K."/>
            <person name="Horiuchi H."/>
            <person name="Kitamoto K."/>
            <person name="Kobayashi T."/>
            <person name="Takeuchi M."/>
            <person name="Denning D.W."/>
            <person name="Galagan J.E."/>
            <person name="Nierman W.C."/>
            <person name="Yu J."/>
            <person name="Archer D.B."/>
            <person name="Bennett J.W."/>
            <person name="Bhatnagar D."/>
            <person name="Cleveland T.E."/>
            <person name="Fedorova N.D."/>
            <person name="Gotoh O."/>
            <person name="Horikawa H."/>
            <person name="Hosoyama A."/>
            <person name="Ichinomiya M."/>
            <person name="Igarashi R."/>
            <person name="Iwashita K."/>
            <person name="Juvvadi P.R."/>
            <person name="Kato M."/>
            <person name="Kato Y."/>
            <person name="Kin T."/>
            <person name="Kokubun A."/>
            <person name="Maeda H."/>
            <person name="Maeyama N."/>
            <person name="Maruyama J."/>
            <person name="Nagasaki H."/>
            <person name="Nakajima T."/>
            <person name="Oda K."/>
            <person name="Okada K."/>
            <person name="Paulsen I."/>
            <person name="Sakamoto K."/>
            <person name="Sawano T."/>
            <person name="Takahashi M."/>
            <person name="Takase K."/>
            <person name="Terabayashi Y."/>
            <person name="Wortman J.R."/>
            <person name="Yamada O."/>
            <person name="Yamagata Y."/>
            <person name="Anazawa H."/>
            <person name="Hata Y."/>
            <person name="Koide Y."/>
            <person name="Komori T."/>
            <person name="Koyama Y."/>
            <person name="Minetoki T."/>
            <person name="Suharnan S."/>
            <person name="Tanaka A."/>
            <person name="Isono K."/>
            <person name="Kuhara S."/>
            <person name="Ogasawara N."/>
            <person name="Kikuchi H."/>
        </authorList>
    </citation>
    <scope>NUCLEOTIDE SEQUENCE [LARGE SCALE GENOMIC DNA]</scope>
    <source>
        <strain>ATCC 42149 / RIB 40</strain>
    </source>
</reference>
<sequence length="191" mass="20637">MTDSDNPLILVTGNKNKVLEVKAILGPTATLEVLDINLPEIQGSVEEITREKCRAAAETIGGPVLVEDSALEMRALGGLPGAYVKAFVETIGNEGLNRILSAFDDKSAEAVCTFGYSQGPGHEPLLFQGRLQGRIVPARGVSSFGWEPIFEVEGEGVTLAEMEVGKKNGLSHRFKALVKFREWFLGARRPV</sequence>
<protein>
    <recommendedName>
        <fullName evidence="1">Inosine triphosphate pyrophosphatase</fullName>
        <shortName evidence="1">ITPase</shortName>
        <shortName evidence="1">Inosine triphosphatase</shortName>
        <ecNumber evidence="1">3.6.1.66</ecNumber>
    </recommendedName>
    <alternativeName>
        <fullName evidence="1">Non-canonical purine NTP pyrophosphatase</fullName>
    </alternativeName>
    <alternativeName>
        <fullName evidence="1">Non-standard purine NTP pyrophosphatase</fullName>
    </alternativeName>
    <alternativeName>
        <fullName evidence="1">Nucleoside-triphosphate diphosphatase</fullName>
    </alternativeName>
    <alternativeName>
        <fullName evidence="1">Nucleoside-triphosphate pyrophosphatase</fullName>
        <shortName evidence="1">NTPase</shortName>
    </alternativeName>
    <alternativeName>
        <fullName evidence="1">XTP/dITP diphosphatase</fullName>
    </alternativeName>
</protein>
<accession>Q2TX99</accession>